<dbReference type="EMBL" id="CR925677">
    <property type="protein sequence ID" value="CAI28009.1"/>
    <property type="molecule type" value="Genomic_DNA"/>
</dbReference>
<dbReference type="RefSeq" id="WP_011255670.1">
    <property type="nucleotide sequence ID" value="NC_006831.1"/>
</dbReference>
<dbReference type="SMR" id="Q5FFN4"/>
<dbReference type="KEGG" id="erg:ERGA_CDS_05570"/>
<dbReference type="HOGENOM" id="CLU_038009_1_1_5"/>
<dbReference type="OrthoDB" id="9805918at2"/>
<dbReference type="Proteomes" id="UP000000533">
    <property type="component" value="Chromosome"/>
</dbReference>
<dbReference type="GO" id="GO:0005737">
    <property type="term" value="C:cytoplasm"/>
    <property type="evidence" value="ECO:0007669"/>
    <property type="project" value="UniProtKB-SubCell"/>
</dbReference>
<dbReference type="GO" id="GO:0005886">
    <property type="term" value="C:plasma membrane"/>
    <property type="evidence" value="ECO:0007669"/>
    <property type="project" value="UniProtKB-SubCell"/>
</dbReference>
<dbReference type="GO" id="GO:0005525">
    <property type="term" value="F:GTP binding"/>
    <property type="evidence" value="ECO:0007669"/>
    <property type="project" value="UniProtKB-UniRule"/>
</dbReference>
<dbReference type="GO" id="GO:0003924">
    <property type="term" value="F:GTPase activity"/>
    <property type="evidence" value="ECO:0007669"/>
    <property type="project" value="UniProtKB-UniRule"/>
</dbReference>
<dbReference type="GO" id="GO:0043024">
    <property type="term" value="F:ribosomal small subunit binding"/>
    <property type="evidence" value="ECO:0007669"/>
    <property type="project" value="TreeGrafter"/>
</dbReference>
<dbReference type="GO" id="GO:0070181">
    <property type="term" value="F:small ribosomal subunit rRNA binding"/>
    <property type="evidence" value="ECO:0007669"/>
    <property type="project" value="UniProtKB-UniRule"/>
</dbReference>
<dbReference type="GO" id="GO:0000028">
    <property type="term" value="P:ribosomal small subunit assembly"/>
    <property type="evidence" value="ECO:0007669"/>
    <property type="project" value="TreeGrafter"/>
</dbReference>
<dbReference type="CDD" id="cd04163">
    <property type="entry name" value="Era"/>
    <property type="match status" value="1"/>
</dbReference>
<dbReference type="CDD" id="cd22534">
    <property type="entry name" value="KH-II_Era"/>
    <property type="match status" value="1"/>
</dbReference>
<dbReference type="Gene3D" id="3.30.300.20">
    <property type="match status" value="1"/>
</dbReference>
<dbReference type="Gene3D" id="3.40.50.300">
    <property type="entry name" value="P-loop containing nucleotide triphosphate hydrolases"/>
    <property type="match status" value="1"/>
</dbReference>
<dbReference type="HAMAP" id="MF_00367">
    <property type="entry name" value="GTPase_Era"/>
    <property type="match status" value="1"/>
</dbReference>
<dbReference type="InterPro" id="IPR030388">
    <property type="entry name" value="G_ERA_dom"/>
</dbReference>
<dbReference type="InterPro" id="IPR006073">
    <property type="entry name" value="GTP-bd"/>
</dbReference>
<dbReference type="InterPro" id="IPR005662">
    <property type="entry name" value="GTPase_Era-like"/>
</dbReference>
<dbReference type="InterPro" id="IPR015946">
    <property type="entry name" value="KH_dom-like_a/b"/>
</dbReference>
<dbReference type="InterPro" id="IPR004044">
    <property type="entry name" value="KH_dom_type_2"/>
</dbReference>
<dbReference type="InterPro" id="IPR027417">
    <property type="entry name" value="P-loop_NTPase"/>
</dbReference>
<dbReference type="InterPro" id="IPR005225">
    <property type="entry name" value="Small_GTP-bd"/>
</dbReference>
<dbReference type="NCBIfam" id="TIGR00436">
    <property type="entry name" value="era"/>
    <property type="match status" value="1"/>
</dbReference>
<dbReference type="NCBIfam" id="NF000908">
    <property type="entry name" value="PRK00089.1"/>
    <property type="match status" value="1"/>
</dbReference>
<dbReference type="NCBIfam" id="TIGR00231">
    <property type="entry name" value="small_GTP"/>
    <property type="match status" value="1"/>
</dbReference>
<dbReference type="PANTHER" id="PTHR42698">
    <property type="entry name" value="GTPASE ERA"/>
    <property type="match status" value="1"/>
</dbReference>
<dbReference type="PANTHER" id="PTHR42698:SF1">
    <property type="entry name" value="GTPASE ERA, MITOCHONDRIAL"/>
    <property type="match status" value="1"/>
</dbReference>
<dbReference type="Pfam" id="PF07650">
    <property type="entry name" value="KH_2"/>
    <property type="match status" value="1"/>
</dbReference>
<dbReference type="Pfam" id="PF01926">
    <property type="entry name" value="MMR_HSR1"/>
    <property type="match status" value="1"/>
</dbReference>
<dbReference type="SUPFAM" id="SSF52540">
    <property type="entry name" value="P-loop containing nucleoside triphosphate hydrolases"/>
    <property type="match status" value="1"/>
</dbReference>
<dbReference type="PROSITE" id="PS51713">
    <property type="entry name" value="G_ERA"/>
    <property type="match status" value="1"/>
</dbReference>
<dbReference type="PROSITE" id="PS50823">
    <property type="entry name" value="KH_TYPE_2"/>
    <property type="match status" value="1"/>
</dbReference>
<accession>Q5FFN4</accession>
<sequence>MNHVGRKCSMSAIVGTTNAGKSTLVNVLVGQKVAAVTPKVQTTRVRMHAVSNHENVQLIFIDTPGIFSPKTKLEKFLVKHAWMSLKGIENVIVLVDVKNYLNQHLKKIIDRIKHSNLNAILVLNKIDIVHQSIVSEVIEYMYSLYKFSKAFTISALYGIGIDKLVDYLCETSPYGPWLYNDDQISDAPLKFFMAEITREKLFITLRHELPYSLSVVTELVEEKEDNSLIIKQVIYVTKDSHKTIILGKKGEMVKKISMESKSDLENILQVKVHLFLFVKVREFWQNHLNECVGYAE</sequence>
<name>ERA_EHRRG</name>
<feature type="chain" id="PRO_1000079694" description="GTPase Era">
    <location>
        <begin position="1"/>
        <end position="296"/>
    </location>
</feature>
<feature type="domain" description="Era-type G" evidence="2">
    <location>
        <begin position="7"/>
        <end position="174"/>
    </location>
</feature>
<feature type="domain" description="KH type-2" evidence="1">
    <location>
        <begin position="205"/>
        <end position="282"/>
    </location>
</feature>
<feature type="region of interest" description="G1" evidence="2">
    <location>
        <begin position="15"/>
        <end position="22"/>
    </location>
</feature>
<feature type="region of interest" description="G2" evidence="2">
    <location>
        <begin position="41"/>
        <end position="45"/>
    </location>
</feature>
<feature type="region of interest" description="G3" evidence="2">
    <location>
        <begin position="62"/>
        <end position="65"/>
    </location>
</feature>
<feature type="region of interest" description="G4" evidence="2">
    <location>
        <begin position="124"/>
        <end position="127"/>
    </location>
</feature>
<feature type="region of interest" description="G5" evidence="2">
    <location>
        <begin position="153"/>
        <end position="155"/>
    </location>
</feature>
<feature type="binding site" evidence="1">
    <location>
        <begin position="15"/>
        <end position="22"/>
    </location>
    <ligand>
        <name>GTP</name>
        <dbReference type="ChEBI" id="CHEBI:37565"/>
    </ligand>
</feature>
<feature type="binding site" evidence="1">
    <location>
        <begin position="62"/>
        <end position="66"/>
    </location>
    <ligand>
        <name>GTP</name>
        <dbReference type="ChEBI" id="CHEBI:37565"/>
    </ligand>
</feature>
<feature type="binding site" evidence="1">
    <location>
        <begin position="124"/>
        <end position="127"/>
    </location>
    <ligand>
        <name>GTP</name>
        <dbReference type="ChEBI" id="CHEBI:37565"/>
    </ligand>
</feature>
<keyword id="KW-0997">Cell inner membrane</keyword>
<keyword id="KW-1003">Cell membrane</keyword>
<keyword id="KW-0963">Cytoplasm</keyword>
<keyword id="KW-0342">GTP-binding</keyword>
<keyword id="KW-0472">Membrane</keyword>
<keyword id="KW-0547">Nucleotide-binding</keyword>
<keyword id="KW-0690">Ribosome biogenesis</keyword>
<keyword id="KW-0694">RNA-binding</keyword>
<keyword id="KW-0699">rRNA-binding</keyword>
<organism>
    <name type="scientific">Ehrlichia ruminantium (strain Gardel)</name>
    <dbReference type="NCBI Taxonomy" id="302409"/>
    <lineage>
        <taxon>Bacteria</taxon>
        <taxon>Pseudomonadati</taxon>
        <taxon>Pseudomonadota</taxon>
        <taxon>Alphaproteobacteria</taxon>
        <taxon>Rickettsiales</taxon>
        <taxon>Anaplasmataceae</taxon>
        <taxon>Ehrlichia</taxon>
    </lineage>
</organism>
<protein>
    <recommendedName>
        <fullName evidence="1">GTPase Era</fullName>
    </recommendedName>
</protein>
<gene>
    <name evidence="1" type="primary">era</name>
    <name type="ordered locus">ERGA_CDS_05570</name>
</gene>
<proteinExistence type="inferred from homology"/>
<reference key="1">
    <citation type="journal article" date="2006" name="J. Bacteriol.">
        <title>Comparative genomic analysis of three strains of Ehrlichia ruminantium reveals an active process of genome size plasticity.</title>
        <authorList>
            <person name="Frutos R."/>
            <person name="Viari A."/>
            <person name="Ferraz C."/>
            <person name="Morgat A."/>
            <person name="Eychenie S."/>
            <person name="Kandassamy Y."/>
            <person name="Chantal I."/>
            <person name="Bensaid A."/>
            <person name="Coissac E."/>
            <person name="Vachiery N."/>
            <person name="Demaille J."/>
            <person name="Martinez D."/>
        </authorList>
    </citation>
    <scope>NUCLEOTIDE SEQUENCE [LARGE SCALE GENOMIC DNA]</scope>
    <source>
        <strain>Gardel</strain>
    </source>
</reference>
<evidence type="ECO:0000255" key="1">
    <source>
        <dbReference type="HAMAP-Rule" id="MF_00367"/>
    </source>
</evidence>
<evidence type="ECO:0000255" key="2">
    <source>
        <dbReference type="PROSITE-ProRule" id="PRU01050"/>
    </source>
</evidence>
<comment type="function">
    <text evidence="1">An essential GTPase that binds both GDP and GTP, with rapid nucleotide exchange. Plays a role in 16S rRNA processing and 30S ribosomal subunit biogenesis and possibly also in cell cycle regulation and energy metabolism.</text>
</comment>
<comment type="subunit">
    <text evidence="1">Monomer.</text>
</comment>
<comment type="subcellular location">
    <subcellularLocation>
        <location>Cytoplasm</location>
    </subcellularLocation>
    <subcellularLocation>
        <location evidence="1">Cell inner membrane</location>
        <topology evidence="1">Peripheral membrane protein</topology>
    </subcellularLocation>
</comment>
<comment type="similarity">
    <text evidence="1 2">Belongs to the TRAFAC class TrmE-Era-EngA-EngB-Septin-like GTPase superfamily. Era GTPase family.</text>
</comment>